<protein>
    <recommendedName>
        <fullName evidence="1">Probable [Fe-S]-dependent transcriptional repressor</fullName>
    </recommendedName>
</protein>
<sequence length="78" mass="8690">MASLIQVRDLLALRGRMEATQISQTLNTPQPMINAMLQQLESMGKAVRIQEEPDGCLSGSCKSCPEGKACLREWWALR</sequence>
<feature type="chain" id="PRO_1000201320" description="Probable [Fe-S]-dependent transcriptional repressor">
    <location>
        <begin position="1"/>
        <end position="78"/>
    </location>
</feature>
<feature type="binding site" evidence="1">
    <location>
        <position position="56"/>
    </location>
    <ligand>
        <name>iron-sulfur cluster</name>
        <dbReference type="ChEBI" id="CHEBI:30408"/>
    </ligand>
</feature>
<feature type="binding site" evidence="1">
    <location>
        <position position="61"/>
    </location>
    <ligand>
        <name>iron-sulfur cluster</name>
        <dbReference type="ChEBI" id="CHEBI:30408"/>
    </ligand>
</feature>
<feature type="binding site" evidence="1">
    <location>
        <position position="64"/>
    </location>
    <ligand>
        <name>iron-sulfur cluster</name>
        <dbReference type="ChEBI" id="CHEBI:30408"/>
    </ligand>
</feature>
<feature type="binding site" evidence="1">
    <location>
        <position position="70"/>
    </location>
    <ligand>
        <name>iron-sulfur cluster</name>
        <dbReference type="ChEBI" id="CHEBI:30408"/>
    </ligand>
</feature>
<dbReference type="EMBL" id="AP009240">
    <property type="protein sequence ID" value="BAG79200.1"/>
    <property type="molecule type" value="Genomic_DNA"/>
</dbReference>
<dbReference type="RefSeq" id="WP_001295699.1">
    <property type="nucleotide sequence ID" value="NC_011415.1"/>
</dbReference>
<dbReference type="SMR" id="B6I2X3"/>
<dbReference type="GeneID" id="93778588"/>
<dbReference type="KEGG" id="ecy:ECSE_3676"/>
<dbReference type="HOGENOM" id="CLU_189182_0_0_6"/>
<dbReference type="Proteomes" id="UP000008199">
    <property type="component" value="Chromosome"/>
</dbReference>
<dbReference type="GO" id="GO:0003677">
    <property type="term" value="F:DNA binding"/>
    <property type="evidence" value="ECO:0007669"/>
    <property type="project" value="UniProtKB-KW"/>
</dbReference>
<dbReference type="GO" id="GO:0005506">
    <property type="term" value="F:iron ion binding"/>
    <property type="evidence" value="ECO:0007669"/>
    <property type="project" value="UniProtKB-UniRule"/>
</dbReference>
<dbReference type="GO" id="GO:0051536">
    <property type="term" value="F:iron-sulfur cluster binding"/>
    <property type="evidence" value="ECO:0007669"/>
    <property type="project" value="UniProtKB-KW"/>
</dbReference>
<dbReference type="Gene3D" id="1.10.10.10">
    <property type="entry name" value="Winged helix-like DNA-binding domain superfamily/Winged helix DNA-binding domain"/>
    <property type="match status" value="1"/>
</dbReference>
<dbReference type="HAMAP" id="MF_01586">
    <property type="entry name" value="FeoC"/>
    <property type="match status" value="1"/>
</dbReference>
<dbReference type="InterPro" id="IPR023732">
    <property type="entry name" value="FeoC"/>
</dbReference>
<dbReference type="InterPro" id="IPR015102">
    <property type="entry name" value="Tscrpt_reg_HTH_FeoC"/>
</dbReference>
<dbReference type="InterPro" id="IPR036388">
    <property type="entry name" value="WH-like_DNA-bd_sf"/>
</dbReference>
<dbReference type="InterPro" id="IPR036390">
    <property type="entry name" value="WH_DNA-bd_sf"/>
</dbReference>
<dbReference type="NCBIfam" id="NF011960">
    <property type="entry name" value="PRK15431.1"/>
    <property type="match status" value="1"/>
</dbReference>
<dbReference type="Pfam" id="PF09012">
    <property type="entry name" value="FeoC"/>
    <property type="match status" value="1"/>
</dbReference>
<dbReference type="SUPFAM" id="SSF46785">
    <property type="entry name" value="Winged helix' DNA-binding domain"/>
    <property type="match status" value="1"/>
</dbReference>
<name>FEOC_ECOSE</name>
<keyword id="KW-0238">DNA-binding</keyword>
<keyword id="KW-0408">Iron</keyword>
<keyword id="KW-0411">Iron-sulfur</keyword>
<keyword id="KW-0479">Metal-binding</keyword>
<keyword id="KW-0678">Repressor</keyword>
<keyword id="KW-0804">Transcription</keyword>
<keyword id="KW-0805">Transcription regulation</keyword>
<gene>
    <name evidence="1" type="primary">feoC</name>
    <name type="ordered locus">ECSE_3676</name>
</gene>
<proteinExistence type="inferred from homology"/>
<accession>B6I2X3</accession>
<reference key="1">
    <citation type="journal article" date="2008" name="DNA Res.">
        <title>Complete genome sequence and comparative analysis of the wild-type commensal Escherichia coli strain SE11 isolated from a healthy adult.</title>
        <authorList>
            <person name="Oshima K."/>
            <person name="Toh H."/>
            <person name="Ogura Y."/>
            <person name="Sasamoto H."/>
            <person name="Morita H."/>
            <person name="Park S.-H."/>
            <person name="Ooka T."/>
            <person name="Iyoda S."/>
            <person name="Taylor T.D."/>
            <person name="Hayashi T."/>
            <person name="Itoh K."/>
            <person name="Hattori M."/>
        </authorList>
    </citation>
    <scope>NUCLEOTIDE SEQUENCE [LARGE SCALE GENOMIC DNA]</scope>
    <source>
        <strain>SE11</strain>
    </source>
</reference>
<comment type="function">
    <text evidence="1">May function as a transcriptional regulator that controls feoABC expression.</text>
</comment>
<comment type="similarity">
    <text evidence="1">Belongs to the FeoC family.</text>
</comment>
<evidence type="ECO:0000255" key="1">
    <source>
        <dbReference type="HAMAP-Rule" id="MF_01586"/>
    </source>
</evidence>
<organism>
    <name type="scientific">Escherichia coli (strain SE11)</name>
    <dbReference type="NCBI Taxonomy" id="409438"/>
    <lineage>
        <taxon>Bacteria</taxon>
        <taxon>Pseudomonadati</taxon>
        <taxon>Pseudomonadota</taxon>
        <taxon>Gammaproteobacteria</taxon>
        <taxon>Enterobacterales</taxon>
        <taxon>Enterobacteriaceae</taxon>
        <taxon>Escherichia</taxon>
    </lineage>
</organism>